<comment type="subcellular location">
    <subcellularLocation>
        <location evidence="1">Cell surface</location>
    </subcellularLocation>
    <subcellularLocation>
        <location evidence="1">Cell membrane</location>
    </subcellularLocation>
</comment>
<accession>C6KSX1</accession>
<evidence type="ECO:0000250" key="1"/>
<evidence type="ECO:0000255" key="2"/>
<evidence type="ECO:0000256" key="3">
    <source>
        <dbReference type="SAM" id="MobiDB-lite"/>
    </source>
</evidence>
<evidence type="ECO:0007829" key="4">
    <source>
        <dbReference type="PDB" id="7KJ7"/>
    </source>
</evidence>
<evidence type="ECO:0007829" key="5">
    <source>
        <dbReference type="PDB" id="7KJH"/>
    </source>
</evidence>
<sequence length="371" mass="43460">MHIVSFIIFFFALFFPISICYKINGVCDFSSEGLSLLPEEKLDFSVSRNVDKLSDENNVRHCVHFSKGFEYLRFICPMRKDNYEGIEIRPVECFEYIHIEGREHKLSEILKGSLYEKSINDNIMTRDVFIPPTIYEDMFFECTCDNSLTFKNNMIGIRGIMKIHLKKNILYGCDFDHDEKLMKNKTAFTNFYDKQKILPLIGNNNNDDDNNDDDNNNDNNNNDNNNNNNNNNNNNNNNNNNNITCNVTIKKSQVYLGIICPDGYTLYPNDCFKNVIYDNNIIIPLKKIIPHDILYHQDKNKRITFASFTLNINENPPGFTCYCIKDQTNINNPLIVNFHFSNQETSYATKNKNLFFYFIFIFPFLYVILLL</sequence>
<reference key="1">
    <citation type="journal article" date="2002" name="Nature">
        <title>Genome sequence of the human malaria parasite Plasmodium falciparum.</title>
        <authorList>
            <person name="Gardner M.J."/>
            <person name="Hall N."/>
            <person name="Fung E."/>
            <person name="White O."/>
            <person name="Berriman M."/>
            <person name="Hyman R.W."/>
            <person name="Carlton J.M."/>
            <person name="Pain A."/>
            <person name="Nelson K.E."/>
            <person name="Bowman S."/>
            <person name="Paulsen I.T."/>
            <person name="James K.D."/>
            <person name="Eisen J.A."/>
            <person name="Rutherford K.M."/>
            <person name="Salzberg S.L."/>
            <person name="Craig A."/>
            <person name="Kyes S."/>
            <person name="Chan M.-S."/>
            <person name="Nene V."/>
            <person name="Shallom S.J."/>
            <person name="Suh B."/>
            <person name="Peterson J."/>
            <person name="Angiuoli S."/>
            <person name="Pertea M."/>
            <person name="Allen J."/>
            <person name="Selengut J."/>
            <person name="Haft D."/>
            <person name="Mather M.W."/>
            <person name="Vaidya A.B."/>
            <person name="Martin D.M.A."/>
            <person name="Fairlamb A.H."/>
            <person name="Fraunholz M.J."/>
            <person name="Roos D.S."/>
            <person name="Ralph S.A."/>
            <person name="McFadden G.I."/>
            <person name="Cummings L.M."/>
            <person name="Subramanian G.M."/>
            <person name="Mungall C."/>
            <person name="Venter J.C."/>
            <person name="Carucci D.J."/>
            <person name="Hoffman S.L."/>
            <person name="Newbold C."/>
            <person name="Davis R.W."/>
            <person name="Fraser C.M."/>
            <person name="Barrell B.G."/>
        </authorList>
    </citation>
    <scope>NUCLEOTIDE SEQUENCE [LARGE SCALE GENOMIC DNA]</scope>
    <source>
        <strain>3D7</strain>
    </source>
</reference>
<reference key="2">
    <citation type="journal article" date="2002" name="Nature">
        <title>Sequence of Plasmodium falciparum chromosomes 1, 3-9 and 13.</title>
        <authorList>
            <person name="Hall N."/>
            <person name="Pain A."/>
            <person name="Berriman M."/>
            <person name="Churcher C.M."/>
            <person name="Harris B."/>
            <person name="Harris D."/>
            <person name="Mungall K.L."/>
            <person name="Bowman S."/>
            <person name="Atkin R."/>
            <person name="Baker S."/>
            <person name="Barron A."/>
            <person name="Brooks K."/>
            <person name="Buckee C.O."/>
            <person name="Burrows C."/>
            <person name="Cherevach I."/>
            <person name="Chillingworth C."/>
            <person name="Chillingworth T."/>
            <person name="Christodoulou Z."/>
            <person name="Clark L."/>
            <person name="Clark R."/>
            <person name="Corton C."/>
            <person name="Cronin A."/>
            <person name="Davies R.M."/>
            <person name="Davis P."/>
            <person name="Dear P."/>
            <person name="Dearden F."/>
            <person name="Doggett J."/>
            <person name="Feltwell T."/>
            <person name="Goble A."/>
            <person name="Goodhead I."/>
            <person name="Gwilliam R."/>
            <person name="Hamlin N."/>
            <person name="Hance Z."/>
            <person name="Harper D."/>
            <person name="Hauser H."/>
            <person name="Hornsby T."/>
            <person name="Holroyd S."/>
            <person name="Horrocks P."/>
            <person name="Humphray S."/>
            <person name="Jagels K."/>
            <person name="James K.D."/>
            <person name="Johnson D."/>
            <person name="Kerhornou A."/>
            <person name="Knights A."/>
            <person name="Konfortov B."/>
            <person name="Kyes S."/>
            <person name="Larke N."/>
            <person name="Lawson D."/>
            <person name="Lennard N."/>
            <person name="Line A."/>
            <person name="Maddison M."/>
            <person name="Mclean J."/>
            <person name="Mooney P."/>
            <person name="Moule S."/>
            <person name="Murphy L."/>
            <person name="Oliver K."/>
            <person name="Ormond D."/>
            <person name="Price C."/>
            <person name="Quail M.A."/>
            <person name="Rabbinowitsch E."/>
            <person name="Rajandream M.A."/>
            <person name="Rutter S."/>
            <person name="Rutherford K.M."/>
            <person name="Sanders M."/>
            <person name="Simmonds M."/>
            <person name="Seeger K."/>
            <person name="Sharp S."/>
            <person name="Smith R."/>
            <person name="Squares R."/>
            <person name="Squares S."/>
            <person name="Stevens K."/>
            <person name="Taylor K."/>
            <person name="Tivey A."/>
            <person name="Unwin L."/>
            <person name="Whitehead S."/>
            <person name="Woodward J.R."/>
            <person name="Sulston J.E."/>
            <person name="Craig A."/>
            <person name="Newbold C."/>
            <person name="Barrell B.G."/>
        </authorList>
    </citation>
    <scope>NUCLEOTIDE SEQUENCE [LARGE SCALE GENOMIC DNA]</scope>
    <source>
        <strain>3D7</strain>
    </source>
</reference>
<reference key="3">
    <citation type="journal article" date="2005" name="Proc. Natl. Acad. Sci. U.S.A.">
        <title>Structural models for the protein family characterized by gamete surface protein Pfs230 of Plasmodium falciparum.</title>
        <authorList>
            <person name="Gerloff D.L."/>
            <person name="Creasey A."/>
            <person name="Maslau S."/>
            <person name="Carter R."/>
        </authorList>
    </citation>
    <scope>IDENTIFICATION</scope>
</reference>
<protein>
    <recommendedName>
        <fullName>Surface protein P12p</fullName>
    </recommendedName>
</protein>
<name>PF12P_PLAF7</name>
<proteinExistence type="evidence at protein level"/>
<keyword id="KW-0002">3D-structure</keyword>
<keyword id="KW-1003">Cell membrane</keyword>
<keyword id="KW-1015">Disulfide bond</keyword>
<keyword id="KW-0325">Glycoprotein</keyword>
<keyword id="KW-0461">Malaria</keyword>
<keyword id="KW-0472">Membrane</keyword>
<keyword id="KW-1185">Reference proteome</keyword>
<keyword id="KW-0677">Repeat</keyword>
<keyword id="KW-0732">Signal</keyword>
<feature type="signal peptide" evidence="2">
    <location>
        <begin position="1"/>
        <end position="20"/>
    </location>
</feature>
<feature type="chain" id="PRO_0000423568" description="Surface protein P12p">
    <location>
        <begin position="21"/>
        <end position="371"/>
    </location>
</feature>
<feature type="domain" description="6-Cys 1">
    <location>
        <begin position="23"/>
        <end position="168"/>
    </location>
</feature>
<feature type="domain" description="6-Cys 2">
    <location>
        <begin position="169"/>
        <end position="343"/>
    </location>
</feature>
<feature type="region of interest" description="Disordered" evidence="3">
    <location>
        <begin position="202"/>
        <end position="239"/>
    </location>
</feature>
<feature type="compositionally biased region" description="Acidic residues" evidence="3">
    <location>
        <begin position="206"/>
        <end position="216"/>
    </location>
</feature>
<feature type="compositionally biased region" description="Low complexity" evidence="3">
    <location>
        <begin position="217"/>
        <end position="239"/>
    </location>
</feature>
<feature type="glycosylation site" description="N-linked (GlcNAc...) asparagine" evidence="2">
    <location>
        <position position="184"/>
    </location>
</feature>
<feature type="glycosylation site" description="N-linked (GlcNAc...) asparagine" evidence="2">
    <location>
        <position position="242"/>
    </location>
</feature>
<feature type="glycosylation site" description="N-linked (GlcNAc...) asparagine" evidence="2">
    <location>
        <position position="246"/>
    </location>
</feature>
<feature type="disulfide bond" evidence="1">
    <location>
        <begin position="27"/>
        <end position="62"/>
    </location>
</feature>
<feature type="disulfide bond" evidence="1">
    <location>
        <begin position="76"/>
        <end position="144"/>
    </location>
</feature>
<feature type="disulfide bond" evidence="1">
    <location>
        <begin position="93"/>
        <end position="142"/>
    </location>
</feature>
<feature type="disulfide bond" evidence="1">
    <location>
        <begin position="173"/>
        <end position="245"/>
    </location>
</feature>
<feature type="disulfide bond" evidence="1">
    <location>
        <begin position="260"/>
        <end position="323"/>
    </location>
</feature>
<feature type="disulfide bond" evidence="1">
    <location>
        <begin position="271"/>
        <end position="321"/>
    </location>
</feature>
<feature type="strand" evidence="5">
    <location>
        <begin position="25"/>
        <end position="28"/>
    </location>
</feature>
<feature type="helix" evidence="5">
    <location>
        <begin position="32"/>
        <end position="34"/>
    </location>
</feature>
<feature type="strand" evidence="5">
    <location>
        <begin position="58"/>
        <end position="66"/>
    </location>
</feature>
<feature type="strand" evidence="5">
    <location>
        <begin position="68"/>
        <end position="77"/>
    </location>
</feature>
<feature type="strand" evidence="5">
    <location>
        <begin position="87"/>
        <end position="90"/>
    </location>
</feature>
<feature type="turn" evidence="5">
    <location>
        <begin position="91"/>
        <end position="95"/>
    </location>
</feature>
<feature type="strand" evidence="5">
    <location>
        <begin position="96"/>
        <end position="99"/>
    </location>
</feature>
<feature type="strand" evidence="5">
    <location>
        <begin position="102"/>
        <end position="105"/>
    </location>
</feature>
<feature type="helix" evidence="5">
    <location>
        <begin position="106"/>
        <end position="109"/>
    </location>
</feature>
<feature type="strand" evidence="5">
    <location>
        <begin position="114"/>
        <end position="119"/>
    </location>
</feature>
<feature type="strand" evidence="5">
    <location>
        <begin position="121"/>
        <end position="130"/>
    </location>
</feature>
<feature type="strand" evidence="5">
    <location>
        <begin position="138"/>
        <end position="145"/>
    </location>
</feature>
<feature type="strand" evidence="5">
    <location>
        <begin position="158"/>
        <end position="165"/>
    </location>
</feature>
<feature type="strand" evidence="5">
    <location>
        <begin position="170"/>
        <end position="177"/>
    </location>
</feature>
<feature type="helix" evidence="5">
    <location>
        <begin position="179"/>
        <end position="182"/>
    </location>
</feature>
<feature type="strand" evidence="5">
    <location>
        <begin position="187"/>
        <end position="193"/>
    </location>
</feature>
<feature type="helix" evidence="5">
    <location>
        <begin position="194"/>
        <end position="197"/>
    </location>
</feature>
<feature type="strand" evidence="5">
    <location>
        <begin position="243"/>
        <end position="249"/>
    </location>
</feature>
<feature type="strand" evidence="5">
    <location>
        <begin position="251"/>
        <end position="259"/>
    </location>
</feature>
<feature type="strand" evidence="5">
    <location>
        <begin position="264"/>
        <end position="268"/>
    </location>
</feature>
<feature type="turn" evidence="5">
    <location>
        <begin position="269"/>
        <end position="272"/>
    </location>
</feature>
<feature type="strand" evidence="5">
    <location>
        <begin position="273"/>
        <end position="277"/>
    </location>
</feature>
<feature type="turn" evidence="5">
    <location>
        <begin position="278"/>
        <end position="280"/>
    </location>
</feature>
<feature type="strand" evidence="5">
    <location>
        <begin position="281"/>
        <end position="284"/>
    </location>
</feature>
<feature type="helix" evidence="5">
    <location>
        <begin position="285"/>
        <end position="288"/>
    </location>
</feature>
<feature type="strand" evidence="5">
    <location>
        <begin position="294"/>
        <end position="297"/>
    </location>
</feature>
<feature type="strand" evidence="5">
    <location>
        <begin position="301"/>
        <end position="309"/>
    </location>
</feature>
<feature type="strand" evidence="5">
    <location>
        <begin position="319"/>
        <end position="325"/>
    </location>
</feature>
<feature type="strand" evidence="4">
    <location>
        <begin position="327"/>
        <end position="329"/>
    </location>
</feature>
<feature type="strand" evidence="5">
    <location>
        <begin position="334"/>
        <end position="340"/>
    </location>
</feature>
<dbReference type="EMBL" id="AL844505">
    <property type="protein sequence ID" value="CAG25367.1"/>
    <property type="molecule type" value="Genomic_DNA"/>
</dbReference>
<dbReference type="RefSeq" id="XP_966115.1">
    <property type="nucleotide sequence ID" value="XM_961022.1"/>
</dbReference>
<dbReference type="PDB" id="7KJ7">
    <property type="method" value="X-ray"/>
    <property type="resolution" value="2.80 A"/>
    <property type="chains" value="A/B=24-341"/>
</dbReference>
<dbReference type="PDB" id="7KJH">
    <property type="method" value="X-ray"/>
    <property type="resolution" value="2.00 A"/>
    <property type="chains" value="C/D=24-341"/>
</dbReference>
<dbReference type="PDB" id="7KJI">
    <property type="method" value="X-ray"/>
    <property type="resolution" value="3.25 A"/>
    <property type="chains" value="B=24-341"/>
</dbReference>
<dbReference type="PDBsum" id="7KJ7"/>
<dbReference type="PDBsum" id="7KJH"/>
<dbReference type="PDBsum" id="7KJI"/>
<dbReference type="SMR" id="C6KSX1"/>
<dbReference type="FunCoup" id="C6KSX1">
    <property type="interactions" value="460"/>
</dbReference>
<dbReference type="GlyCosmos" id="C6KSX1">
    <property type="glycosylation" value="3 sites, No reported glycans"/>
</dbReference>
<dbReference type="SwissPalm" id="C6KSX1"/>
<dbReference type="PaxDb" id="5833-PFF0620c"/>
<dbReference type="EnsemblProtists" id="CAG25367">
    <property type="protein sequence ID" value="CAG25367"/>
    <property type="gene ID" value="PF3D7_0612800"/>
</dbReference>
<dbReference type="KEGG" id="pfa:PF3D7_0612800"/>
<dbReference type="VEuPathDB" id="PlasmoDB:PF3D7_0612800"/>
<dbReference type="HOGENOM" id="CLU_845892_0_0_1"/>
<dbReference type="InParanoid" id="C6KSX1"/>
<dbReference type="OMA" id="FGCDFDH"/>
<dbReference type="OrthoDB" id="369273at2759"/>
<dbReference type="PhylomeDB" id="C6KSX1"/>
<dbReference type="Proteomes" id="UP000001450">
    <property type="component" value="Chromosome 6"/>
</dbReference>
<dbReference type="GO" id="GO:0009986">
    <property type="term" value="C:cell surface"/>
    <property type="evidence" value="ECO:0007669"/>
    <property type="project" value="UniProtKB-SubCell"/>
</dbReference>
<dbReference type="GO" id="GO:0005886">
    <property type="term" value="C:plasma membrane"/>
    <property type="evidence" value="ECO:0007669"/>
    <property type="project" value="UniProtKB-SubCell"/>
</dbReference>
<dbReference type="Gene3D" id="2.60.40.2860">
    <property type="match status" value="2"/>
</dbReference>
<dbReference type="InterPro" id="IPR010884">
    <property type="entry name" value="6_CYS_dom"/>
</dbReference>
<dbReference type="InterPro" id="IPR038160">
    <property type="entry name" value="6_CYS_dom_sf"/>
</dbReference>
<dbReference type="Pfam" id="PF07422">
    <property type="entry name" value="s48_45"/>
    <property type="match status" value="2"/>
</dbReference>
<dbReference type="SMART" id="SM00970">
    <property type="entry name" value="s48_45"/>
    <property type="match status" value="2"/>
</dbReference>
<dbReference type="PROSITE" id="PS51701">
    <property type="entry name" value="6_CYS"/>
    <property type="match status" value="2"/>
</dbReference>
<gene>
    <name type="primary">PFS12P</name>
    <name type="synonym">PF12P</name>
    <name type="ORF">PFF0620c</name>
</gene>
<organism>
    <name type="scientific">Plasmodium falciparum (isolate 3D7)</name>
    <dbReference type="NCBI Taxonomy" id="36329"/>
    <lineage>
        <taxon>Eukaryota</taxon>
        <taxon>Sar</taxon>
        <taxon>Alveolata</taxon>
        <taxon>Apicomplexa</taxon>
        <taxon>Aconoidasida</taxon>
        <taxon>Haemosporida</taxon>
        <taxon>Plasmodiidae</taxon>
        <taxon>Plasmodium</taxon>
        <taxon>Plasmodium (Laverania)</taxon>
    </lineage>
</organism>